<evidence type="ECO:0000255" key="1">
    <source>
        <dbReference type="HAMAP-Rule" id="MF_00168"/>
    </source>
</evidence>
<organism>
    <name type="scientific">Photorhabdus laumondii subsp. laumondii (strain DSM 15139 / CIP 105565 / TT01)</name>
    <name type="common">Photorhabdus luminescens subsp. laumondii</name>
    <dbReference type="NCBI Taxonomy" id="243265"/>
    <lineage>
        <taxon>Bacteria</taxon>
        <taxon>Pseudomonadati</taxon>
        <taxon>Pseudomonadota</taxon>
        <taxon>Gammaproteobacteria</taxon>
        <taxon>Enterobacterales</taxon>
        <taxon>Morganellaceae</taxon>
        <taxon>Photorhabdus</taxon>
    </lineage>
</organism>
<sequence length="374" mass="42737">MKFELQTTDGQARRGRLIFERGVVETPAFMPVGTYGTVKGMTPEEVKETGAQILLGNTFHLWLRPGQEIMKLHGDLHGFMQWHGPILTDSGGFQVFSLGAMRKIKEEGVHFRNPINGTPVFLSPEKSMEIQYDLGSDIVMIFDECTPYPADWDYAKRSMEMSLRWAARSRKRFDELQNKNALFGIIQGSIYEDLRDISVKGLVEIGFDGYAVGGLAVGEPKEDMHRILEHVCPQIPQDKPRYLMGVGKPEDLVEGVRRGIDMFDCVMPTRNARNGHLFVTHGVIKIRNAKHKEDTSPLDEQCDCYTCRNYSRAYLHHLDRCNEILGARLNTIHNLRYYQRLMAKIRQAIEEGNLEQFVEDFYQRIGKPVPALSI</sequence>
<keyword id="KW-0328">Glycosyltransferase</keyword>
<keyword id="KW-0479">Metal-binding</keyword>
<keyword id="KW-0671">Queuosine biosynthesis</keyword>
<keyword id="KW-1185">Reference proteome</keyword>
<keyword id="KW-0808">Transferase</keyword>
<keyword id="KW-0819">tRNA processing</keyword>
<keyword id="KW-0862">Zinc</keyword>
<accession>Q7MB01</accession>
<proteinExistence type="inferred from homology"/>
<reference key="1">
    <citation type="journal article" date="2003" name="Nat. Biotechnol.">
        <title>The genome sequence of the entomopathogenic bacterium Photorhabdus luminescens.</title>
        <authorList>
            <person name="Duchaud E."/>
            <person name="Rusniok C."/>
            <person name="Frangeul L."/>
            <person name="Buchrieser C."/>
            <person name="Givaudan A."/>
            <person name="Taourit S."/>
            <person name="Bocs S."/>
            <person name="Boursaux-Eude C."/>
            <person name="Chandler M."/>
            <person name="Charles J.-F."/>
            <person name="Dassa E."/>
            <person name="Derose R."/>
            <person name="Derzelle S."/>
            <person name="Freyssinet G."/>
            <person name="Gaudriault S."/>
            <person name="Medigue C."/>
            <person name="Lanois A."/>
            <person name="Powell K."/>
            <person name="Siguier P."/>
            <person name="Vincent R."/>
            <person name="Wingate V."/>
            <person name="Zouine M."/>
            <person name="Glaser P."/>
            <person name="Boemare N."/>
            <person name="Danchin A."/>
            <person name="Kunst F."/>
        </authorList>
    </citation>
    <scope>NUCLEOTIDE SEQUENCE [LARGE SCALE GENOMIC DNA]</scope>
    <source>
        <strain>DSM 15139 / CIP 105565 / TT01</strain>
    </source>
</reference>
<protein>
    <recommendedName>
        <fullName evidence="1">Queuine tRNA-ribosyltransferase</fullName>
        <ecNumber evidence="1">2.4.2.29</ecNumber>
    </recommendedName>
    <alternativeName>
        <fullName evidence="1">Guanine insertion enzyme</fullName>
    </alternativeName>
    <alternativeName>
        <fullName evidence="1">tRNA-guanine transglycosylase</fullName>
    </alternativeName>
</protein>
<comment type="function">
    <text evidence="1">Catalyzes the base-exchange of a guanine (G) residue with the queuine precursor 7-aminomethyl-7-deazaguanine (PreQ1) at position 34 (anticodon wobble position) in tRNAs with GU(N) anticodons (tRNA-Asp, -Asn, -His and -Tyr). Catalysis occurs through a double-displacement mechanism. The nucleophile active site attacks the C1' of nucleotide 34 to detach the guanine base from the RNA, forming a covalent enzyme-RNA intermediate. The proton acceptor active site deprotonates the incoming PreQ1, allowing a nucleophilic attack on the C1' of the ribose to form the product. After dissociation, two additional enzymatic reactions on the tRNA convert PreQ1 to queuine (Q), resulting in the hypermodified nucleoside queuosine (7-(((4,5-cis-dihydroxy-2-cyclopenten-1-yl)amino)methyl)-7-deazaguanosine).</text>
</comment>
<comment type="catalytic activity">
    <reaction evidence="1">
        <text>7-aminomethyl-7-carbaguanine + guanosine(34) in tRNA = 7-aminomethyl-7-carbaguanosine(34) in tRNA + guanine</text>
        <dbReference type="Rhea" id="RHEA:24104"/>
        <dbReference type="Rhea" id="RHEA-COMP:10341"/>
        <dbReference type="Rhea" id="RHEA-COMP:10342"/>
        <dbReference type="ChEBI" id="CHEBI:16235"/>
        <dbReference type="ChEBI" id="CHEBI:58703"/>
        <dbReference type="ChEBI" id="CHEBI:74269"/>
        <dbReference type="ChEBI" id="CHEBI:82833"/>
        <dbReference type="EC" id="2.4.2.29"/>
    </reaction>
</comment>
<comment type="cofactor">
    <cofactor evidence="1">
        <name>Zn(2+)</name>
        <dbReference type="ChEBI" id="CHEBI:29105"/>
    </cofactor>
    <text evidence="1">Binds 1 zinc ion per subunit.</text>
</comment>
<comment type="pathway">
    <text evidence="1">tRNA modification; tRNA-queuosine biosynthesis.</text>
</comment>
<comment type="subunit">
    <text evidence="1">Homodimer. Within each dimer, one monomer is responsible for RNA recognition and catalysis, while the other monomer binds to the replacement base PreQ1.</text>
</comment>
<comment type="similarity">
    <text evidence="1">Belongs to the queuine tRNA-ribosyltransferase family.</text>
</comment>
<name>TGT_PHOLL</name>
<gene>
    <name evidence="1" type="primary">tgt</name>
    <name type="ordered locus">plu3904</name>
</gene>
<dbReference type="EC" id="2.4.2.29" evidence="1"/>
<dbReference type="EMBL" id="BX571872">
    <property type="protein sequence ID" value="CAE16276.1"/>
    <property type="molecule type" value="Genomic_DNA"/>
</dbReference>
<dbReference type="RefSeq" id="WP_011148039.1">
    <property type="nucleotide sequence ID" value="NC_005126.1"/>
</dbReference>
<dbReference type="SMR" id="Q7MB01"/>
<dbReference type="STRING" id="243265.plu3904"/>
<dbReference type="GeneID" id="48850133"/>
<dbReference type="KEGG" id="plu:plu3904"/>
<dbReference type="eggNOG" id="COG0343">
    <property type="taxonomic scope" value="Bacteria"/>
</dbReference>
<dbReference type="HOGENOM" id="CLU_022060_0_1_6"/>
<dbReference type="OrthoDB" id="9805417at2"/>
<dbReference type="UniPathway" id="UPA00392"/>
<dbReference type="Proteomes" id="UP000002514">
    <property type="component" value="Chromosome"/>
</dbReference>
<dbReference type="GO" id="GO:0005829">
    <property type="term" value="C:cytosol"/>
    <property type="evidence" value="ECO:0007669"/>
    <property type="project" value="TreeGrafter"/>
</dbReference>
<dbReference type="GO" id="GO:0046872">
    <property type="term" value="F:metal ion binding"/>
    <property type="evidence" value="ECO:0007669"/>
    <property type="project" value="UniProtKB-KW"/>
</dbReference>
<dbReference type="GO" id="GO:0008479">
    <property type="term" value="F:tRNA-guanosine(34) queuine transglycosylase activity"/>
    <property type="evidence" value="ECO:0007669"/>
    <property type="project" value="UniProtKB-UniRule"/>
</dbReference>
<dbReference type="GO" id="GO:0008616">
    <property type="term" value="P:queuosine biosynthetic process"/>
    <property type="evidence" value="ECO:0007669"/>
    <property type="project" value="UniProtKB-UniRule"/>
</dbReference>
<dbReference type="GO" id="GO:0002099">
    <property type="term" value="P:tRNA wobble guanine modification"/>
    <property type="evidence" value="ECO:0007669"/>
    <property type="project" value="TreeGrafter"/>
</dbReference>
<dbReference type="GO" id="GO:0101030">
    <property type="term" value="P:tRNA-guanine transglycosylation"/>
    <property type="evidence" value="ECO:0007669"/>
    <property type="project" value="InterPro"/>
</dbReference>
<dbReference type="FunFam" id="3.20.20.105:FF:000001">
    <property type="entry name" value="Queuine tRNA-ribosyltransferase"/>
    <property type="match status" value="1"/>
</dbReference>
<dbReference type="Gene3D" id="3.20.20.105">
    <property type="entry name" value="Queuine tRNA-ribosyltransferase-like"/>
    <property type="match status" value="1"/>
</dbReference>
<dbReference type="HAMAP" id="MF_00168">
    <property type="entry name" value="Q_tRNA_Tgt"/>
    <property type="match status" value="1"/>
</dbReference>
<dbReference type="InterPro" id="IPR050076">
    <property type="entry name" value="ArchSynthase1/Queuine_TRR"/>
</dbReference>
<dbReference type="InterPro" id="IPR004803">
    <property type="entry name" value="TGT"/>
</dbReference>
<dbReference type="InterPro" id="IPR036511">
    <property type="entry name" value="TGT-like_sf"/>
</dbReference>
<dbReference type="InterPro" id="IPR002616">
    <property type="entry name" value="tRNA_ribo_trans-like"/>
</dbReference>
<dbReference type="NCBIfam" id="TIGR00430">
    <property type="entry name" value="Q_tRNA_tgt"/>
    <property type="match status" value="1"/>
</dbReference>
<dbReference type="NCBIfam" id="TIGR00449">
    <property type="entry name" value="tgt_general"/>
    <property type="match status" value="1"/>
</dbReference>
<dbReference type="PANTHER" id="PTHR46499">
    <property type="entry name" value="QUEUINE TRNA-RIBOSYLTRANSFERASE"/>
    <property type="match status" value="1"/>
</dbReference>
<dbReference type="PANTHER" id="PTHR46499:SF1">
    <property type="entry name" value="QUEUINE TRNA-RIBOSYLTRANSFERASE"/>
    <property type="match status" value="1"/>
</dbReference>
<dbReference type="Pfam" id="PF01702">
    <property type="entry name" value="TGT"/>
    <property type="match status" value="1"/>
</dbReference>
<dbReference type="SUPFAM" id="SSF51713">
    <property type="entry name" value="tRNA-guanine transglycosylase"/>
    <property type="match status" value="1"/>
</dbReference>
<feature type="chain" id="PRO_0000135501" description="Queuine tRNA-ribosyltransferase">
    <location>
        <begin position="1"/>
        <end position="374"/>
    </location>
</feature>
<feature type="region of interest" description="RNA binding" evidence="1">
    <location>
        <begin position="245"/>
        <end position="251"/>
    </location>
</feature>
<feature type="region of interest" description="RNA binding; important for wobble base 34 recognition" evidence="1">
    <location>
        <begin position="269"/>
        <end position="273"/>
    </location>
</feature>
<feature type="active site" description="Proton acceptor" evidence="1">
    <location>
        <position position="89"/>
    </location>
</feature>
<feature type="active site" description="Nucleophile" evidence="1">
    <location>
        <position position="264"/>
    </location>
</feature>
<feature type="binding site" evidence="1">
    <location>
        <begin position="89"/>
        <end position="93"/>
    </location>
    <ligand>
        <name>substrate</name>
    </ligand>
</feature>
<feature type="binding site" evidence="1">
    <location>
        <position position="143"/>
    </location>
    <ligand>
        <name>substrate</name>
    </ligand>
</feature>
<feature type="binding site" evidence="1">
    <location>
        <position position="187"/>
    </location>
    <ligand>
        <name>substrate</name>
    </ligand>
</feature>
<feature type="binding site" evidence="1">
    <location>
        <position position="214"/>
    </location>
    <ligand>
        <name>substrate</name>
    </ligand>
</feature>
<feature type="binding site" evidence="1">
    <location>
        <position position="302"/>
    </location>
    <ligand>
        <name>Zn(2+)</name>
        <dbReference type="ChEBI" id="CHEBI:29105"/>
    </ligand>
</feature>
<feature type="binding site" evidence="1">
    <location>
        <position position="304"/>
    </location>
    <ligand>
        <name>Zn(2+)</name>
        <dbReference type="ChEBI" id="CHEBI:29105"/>
    </ligand>
</feature>
<feature type="binding site" evidence="1">
    <location>
        <position position="307"/>
    </location>
    <ligand>
        <name>Zn(2+)</name>
        <dbReference type="ChEBI" id="CHEBI:29105"/>
    </ligand>
</feature>
<feature type="binding site" evidence="1">
    <location>
        <position position="333"/>
    </location>
    <ligand>
        <name>Zn(2+)</name>
        <dbReference type="ChEBI" id="CHEBI:29105"/>
    </ligand>
</feature>